<reference key="1">
    <citation type="submission" date="1998-12" db="EMBL/GenBank/DDBJ databases">
        <title>CD81 cDNA sequence derived from chimpanzee cells.</title>
        <authorList>
            <person name="Levy S."/>
            <person name="Kuo C.C."/>
        </authorList>
    </citation>
    <scope>NUCLEOTIDE SEQUENCE [MRNA]</scope>
</reference>
<comment type="function">
    <text evidence="1 2">Structural component of specialized membrane microdomains known as tetraspanin-enriched microdomains (TERMs), which act as platforms for receptor clustering and signaling. Essential for trafficking and compartmentalization of CD19 receptor on the surface of activated B cells. Upon initial encounter with microbial pathogens, enables the assembly of CD19-CR2/CD21 and B cell receptor (BCR) complexes at signaling TERMs, lowering the threshold dose of antigen required to trigger B cell clonal expansion and antibody production. In T cells, facilitates the localization of CD247/CD3 zeta at antigen-induced synapses with B cells, providing for costimulation and polarization toward T helper type 2 phenotype. Present in MHC class II compartments, may also play a role in antigen presentation (By similarity). Can act both as positive and negative regulator of homotypic or heterotypic cell-cell fusion processes. Positively regulates sperm-egg fusion and may be involved in acrosome reaction. In myoblasts, associates with CD9 and PTGFRN and inhibits myotube fusion during muscle regeneration (By similarity). In macrophages, associates with CD9 and beta-1 and beta-2 integrins, and prevents macrophage fusion into multinucleated giant cells specialized in ingesting complement-opsonized large particles (By similarity). Also prevents the fusion of mononuclear cell progenitors into osteoclasts in charge of bone resorption (By similarity). May regulate the compartmentalization of enzymatic activities. In T cells, defines the subcellular localization of dNTPase SAMHD1 and permits its degradation by the proteasome, thereby controlling intracellular dNTP levels (By similarity). Also involved in cell adhesion and motility. Positively regulates integrin-mediated adhesion of macrophages, particularly relevant for the inflammatory response in the lung (By similarity).</text>
</comment>
<comment type="subunit">
    <text evidence="1 2">Homodimer. Part of a complex composed of CD19, CR2/CD21, CD81 and IFITM1/CD225 in the membrane of mature B cells. Interacts (via the second extracellular domain) with CD19; this interaction is initiated early during biosynthesis in the ER and enables trafficking of only properly folded CD19. Part of a complex that includes MHC class II/HLA-DR molecules and IFITM1. Interacts with IFITM1 (By similarity). Interacts with IFITM2 and IFITM3 (By similarity). Part of integrin-tetraspanin complex composed of CD9, CD81, beta-1 and beta-2 integrins in the membrane of monocyte/macrophages. Interacts (via the second extracellular domain) with integrin ITGAV:ITGB3. Interacts with CD247/CD3 zeta, ICAM1 and CD9 at the immune synapse on T cell membrane (By similarity). Part of a GPCR-tetraspanin complex consisting at least of ADGRG1, CD81, possibly CD9, and GNA11 in which CD81 enhances the association of ADGRG1 with GNA11. Part of a complex composed of CD9, CD81, PTGFRN and IGSF8 (By similarity). Interacts directly with IGSF8. Interacts with CD53 and SCIMP. Interacts with SAMHD1 (via its C-terminus) (By similarity). Interacts with glypican GPC3 and with the transcriptional repressor HHEX; binding to GPC3 decreases the availability of free CD81 for binding to HHEX, resulting in nuclear translocation of HHEX and transcriptional repression (By similarity). Interacts with CLDN1. Interacts with CLDN6 and CLDN9 (By similarity).</text>
</comment>
<comment type="subcellular location">
    <subcellularLocation>
        <location evidence="1">Cell membrane</location>
        <topology evidence="3">Multi-pass membrane protein</topology>
    </subcellularLocation>
    <subcellularLocation>
        <location evidence="2">Basolateral cell membrane</location>
        <topology evidence="3">Multi-pass membrane protein</topology>
    </subcellularLocation>
    <text evidence="2">Associates with CLDN1 and the CLDN1-CD81 complex localizes to the basolateral cell membrane.</text>
</comment>
<comment type="domain">
    <text evidence="2">Binds cholesterol in a cavity lined by the transmembrane spans.</text>
</comment>
<comment type="PTM">
    <text evidence="4">Not glycosylated.</text>
</comment>
<comment type="PTM">
    <text evidence="2">Likely constitutively palmitoylated at low levels. Protein palmitoylation is up-regulated upon coligation of BCR and CD9-C2R-CD81 complexes in lipid rafts.</text>
</comment>
<comment type="similarity">
    <text evidence="4">Belongs to the tetraspanin (TM4SF) family.</text>
</comment>
<sequence length="236" mass="25809">MGVEGCTKCIKYLLFVFNFVFWLAGGVILGVALWLRHDPQTTNLLYLELGDKPAPNTFYVGIYILIAVGAVMMFVGFLGCYGAIQESQCLLGTFFTCLVILFACEVAAGIWGFVNKDQIAKDVKQFYDQALQQAVVDDDANNAKAVVKTFHETLDCCGSSTLTALTTSVLKNNLCPSGSNIISNLFKEDCHQKIDDLFSGKLYLIGIAAIVVAVIMIFEMILSMVLCCGIRNSSVY</sequence>
<name>CD81_PANTR</name>
<proteinExistence type="evidence at transcript level"/>
<evidence type="ECO:0000250" key="1">
    <source>
        <dbReference type="UniProtKB" id="P35762"/>
    </source>
</evidence>
<evidence type="ECO:0000250" key="2">
    <source>
        <dbReference type="UniProtKB" id="P60033"/>
    </source>
</evidence>
<evidence type="ECO:0000255" key="3"/>
<evidence type="ECO:0000305" key="4"/>
<feature type="chain" id="PRO_0000219223" description="CD81 antigen">
    <location>
        <begin position="1"/>
        <end position="236"/>
    </location>
</feature>
<feature type="topological domain" description="Cytoplasmic" evidence="4">
    <location>
        <begin position="1"/>
        <end position="12"/>
    </location>
</feature>
<feature type="transmembrane region" description="Helical" evidence="2">
    <location>
        <begin position="13"/>
        <end position="33"/>
    </location>
</feature>
<feature type="topological domain" description="Extracellular" evidence="4">
    <location>
        <begin position="34"/>
        <end position="63"/>
    </location>
</feature>
<feature type="transmembrane region" description="Helical" evidence="2">
    <location>
        <begin position="64"/>
        <end position="84"/>
    </location>
</feature>
<feature type="topological domain" description="Cytoplasmic" evidence="4">
    <location>
        <begin position="85"/>
        <end position="89"/>
    </location>
</feature>
<feature type="transmembrane region" description="Helical" evidence="2">
    <location>
        <begin position="90"/>
        <end position="112"/>
    </location>
</feature>
<feature type="topological domain" description="Extracellular" evidence="4">
    <location>
        <begin position="113"/>
        <end position="201"/>
    </location>
</feature>
<feature type="transmembrane region" description="Helical" evidence="2">
    <location>
        <begin position="202"/>
        <end position="224"/>
    </location>
</feature>
<feature type="topological domain" description="Cytoplasmic" evidence="4">
    <location>
        <begin position="225"/>
        <end position="236"/>
    </location>
</feature>
<feature type="binding site" evidence="2">
    <location>
        <position position="219"/>
    </location>
    <ligand>
        <name>cholesterol</name>
        <dbReference type="ChEBI" id="CHEBI:16113"/>
    </ligand>
</feature>
<feature type="site" description="Important for interaction with integrin" evidence="2">
    <location>
        <position position="116"/>
    </location>
</feature>
<feature type="site" description="Important for interaction with integrin" evidence="2">
    <location>
        <position position="144"/>
    </location>
</feature>
<feature type="site" description="Important for interaction with integrin" evidence="2">
    <location>
        <position position="148"/>
    </location>
</feature>
<feature type="disulfide bond" evidence="2">
    <location>
        <begin position="156"/>
        <end position="190"/>
    </location>
</feature>
<feature type="disulfide bond" evidence="2">
    <location>
        <begin position="157"/>
        <end position="175"/>
    </location>
</feature>
<dbReference type="EMBL" id="AF116600">
    <property type="protein sequence ID" value="AAD11440.1"/>
    <property type="molecule type" value="mRNA"/>
</dbReference>
<dbReference type="RefSeq" id="NP_001009023.1">
    <property type="nucleotide sequence ID" value="NM_001009023.1"/>
</dbReference>
<dbReference type="BMRB" id="P60034"/>
<dbReference type="SMR" id="P60034"/>
<dbReference type="FunCoup" id="P60034">
    <property type="interactions" value="268"/>
</dbReference>
<dbReference type="STRING" id="9598.ENSPTRP00000074537"/>
<dbReference type="PaxDb" id="9598-ENSPTRP00000005617"/>
<dbReference type="GeneID" id="449635"/>
<dbReference type="KEGG" id="ptr:449635"/>
<dbReference type="CTD" id="975"/>
<dbReference type="eggNOG" id="KOG3882">
    <property type="taxonomic scope" value="Eukaryota"/>
</dbReference>
<dbReference type="InParanoid" id="P60034"/>
<dbReference type="OrthoDB" id="15844at9604"/>
<dbReference type="Proteomes" id="UP000002277">
    <property type="component" value="Unplaced"/>
</dbReference>
<dbReference type="GO" id="GO:0016323">
    <property type="term" value="C:basolateral plasma membrane"/>
    <property type="evidence" value="ECO:0007669"/>
    <property type="project" value="UniProtKB-SubCell"/>
</dbReference>
<dbReference type="GO" id="GO:0001772">
    <property type="term" value="C:immunological synapse"/>
    <property type="evidence" value="ECO:0000250"/>
    <property type="project" value="UniProtKB"/>
</dbReference>
<dbReference type="GO" id="GO:0016020">
    <property type="term" value="C:membrane"/>
    <property type="evidence" value="ECO:0000250"/>
    <property type="project" value="UniProtKB"/>
</dbReference>
<dbReference type="GO" id="GO:0005886">
    <property type="term" value="C:plasma membrane"/>
    <property type="evidence" value="ECO:0000250"/>
    <property type="project" value="UniProtKB"/>
</dbReference>
<dbReference type="GO" id="GO:0097197">
    <property type="term" value="C:tetraspanin-enriched microdomain"/>
    <property type="evidence" value="ECO:0000250"/>
    <property type="project" value="UniProtKB"/>
</dbReference>
<dbReference type="GO" id="GO:0015485">
    <property type="term" value="F:cholesterol binding"/>
    <property type="evidence" value="ECO:0000250"/>
    <property type="project" value="UniProtKB"/>
</dbReference>
<dbReference type="GO" id="GO:0005178">
    <property type="term" value="F:integrin binding"/>
    <property type="evidence" value="ECO:0000250"/>
    <property type="project" value="UniProtKB"/>
</dbReference>
<dbReference type="GO" id="GO:0035783">
    <property type="term" value="P:CD4-positive, alpha-beta T cell costimulation"/>
    <property type="evidence" value="ECO:0000250"/>
    <property type="project" value="UniProtKB"/>
</dbReference>
<dbReference type="GO" id="GO:0071404">
    <property type="term" value="P:cellular response to low-density lipoprotein particle stimulus"/>
    <property type="evidence" value="ECO:0000250"/>
    <property type="project" value="UniProtKB"/>
</dbReference>
<dbReference type="GO" id="GO:0002455">
    <property type="term" value="P:humoral immune response mediated by circulating immunoglobulin"/>
    <property type="evidence" value="ECO:0000250"/>
    <property type="project" value="UniProtKB"/>
</dbReference>
<dbReference type="GO" id="GO:0001771">
    <property type="term" value="P:immunological synapse formation"/>
    <property type="evidence" value="ECO:0000250"/>
    <property type="project" value="UniProtKB"/>
</dbReference>
<dbReference type="GO" id="GO:0034238">
    <property type="term" value="P:macrophage fusion"/>
    <property type="evidence" value="ECO:0000250"/>
    <property type="project" value="UniProtKB"/>
</dbReference>
<dbReference type="GO" id="GO:0014905">
    <property type="term" value="P:myoblast fusion involved in skeletal muscle regeneration"/>
    <property type="evidence" value="ECO:0000250"/>
    <property type="project" value="UniProtKB"/>
</dbReference>
<dbReference type="GO" id="GO:0072675">
    <property type="term" value="P:osteoclast fusion"/>
    <property type="evidence" value="ECO:0000250"/>
    <property type="project" value="UniProtKB"/>
</dbReference>
<dbReference type="GO" id="GO:0050871">
    <property type="term" value="P:positive regulation of B cell activation"/>
    <property type="evidence" value="ECO:0000250"/>
    <property type="project" value="UniProtKB"/>
</dbReference>
<dbReference type="GO" id="GO:0050861">
    <property type="term" value="P:positive regulation of B cell receptor signaling pathway"/>
    <property type="evidence" value="ECO:0000250"/>
    <property type="project" value="UniProtKB"/>
</dbReference>
<dbReference type="GO" id="GO:2000563">
    <property type="term" value="P:positive regulation of CD4-positive, alpha-beta T cell proliferation"/>
    <property type="evidence" value="ECO:0000250"/>
    <property type="project" value="UniProtKB"/>
</dbReference>
<dbReference type="GO" id="GO:0002863">
    <property type="term" value="P:positive regulation of inflammatory response to antigenic stimulus"/>
    <property type="evidence" value="ECO:0000250"/>
    <property type="project" value="UniProtKB"/>
</dbReference>
<dbReference type="GO" id="GO:0043410">
    <property type="term" value="P:positive regulation of MAPK cascade"/>
    <property type="evidence" value="ECO:0000250"/>
    <property type="project" value="UniProtKB"/>
</dbReference>
<dbReference type="GO" id="GO:0070863">
    <property type="term" value="P:positive regulation of protein exit from endoplasmic reticulum"/>
    <property type="evidence" value="ECO:0000250"/>
    <property type="project" value="UniProtKB"/>
</dbReference>
<dbReference type="GO" id="GO:1903911">
    <property type="term" value="P:positive regulation of receptor clustering"/>
    <property type="evidence" value="ECO:0000250"/>
    <property type="project" value="UniProtKB"/>
</dbReference>
<dbReference type="GO" id="GO:2001190">
    <property type="term" value="P:positive regulation of T cell activation via T cell receptor contact with antigen bound to MHC molecule on antigen presenting cell"/>
    <property type="evidence" value="ECO:0000250"/>
    <property type="project" value="UniProtKB"/>
</dbReference>
<dbReference type="GO" id="GO:0050862">
    <property type="term" value="P:positive regulation of T cell receptor signaling pathway"/>
    <property type="evidence" value="ECO:0000250"/>
    <property type="project" value="UniProtKB"/>
</dbReference>
<dbReference type="GO" id="GO:2000553">
    <property type="term" value="P:positive regulation of T-helper 2 cell cytokine production"/>
    <property type="evidence" value="ECO:0000250"/>
    <property type="project" value="UniProtKB"/>
</dbReference>
<dbReference type="GO" id="GO:0072659">
    <property type="term" value="P:protein localization to plasma membrane"/>
    <property type="evidence" value="ECO:0000250"/>
    <property type="project" value="UniProtKB"/>
</dbReference>
<dbReference type="GO" id="GO:0031623">
    <property type="term" value="P:receptor internalization"/>
    <property type="evidence" value="ECO:0000250"/>
    <property type="project" value="UniProtKB"/>
</dbReference>
<dbReference type="GO" id="GO:1905521">
    <property type="term" value="P:regulation of macrophage migration"/>
    <property type="evidence" value="ECO:0000250"/>
    <property type="project" value="UniProtKB"/>
</dbReference>
<dbReference type="CDD" id="cd03151">
    <property type="entry name" value="CD81_like_LEL"/>
    <property type="match status" value="1"/>
</dbReference>
<dbReference type="FunFam" id="1.10.1450.10:FF:000010">
    <property type="entry name" value="Tetraspanin"/>
    <property type="match status" value="1"/>
</dbReference>
<dbReference type="Gene3D" id="1.10.1450.10">
    <property type="entry name" value="Tetraspanin"/>
    <property type="match status" value="1"/>
</dbReference>
<dbReference type="InterPro" id="IPR018499">
    <property type="entry name" value="Tetraspanin/Peripherin"/>
</dbReference>
<dbReference type="InterPro" id="IPR000301">
    <property type="entry name" value="Tetraspanin_animals"/>
</dbReference>
<dbReference type="InterPro" id="IPR018503">
    <property type="entry name" value="Tetraspanin_CS"/>
</dbReference>
<dbReference type="InterPro" id="IPR008952">
    <property type="entry name" value="Tetraspanin_EC2_sf"/>
</dbReference>
<dbReference type="PANTHER" id="PTHR19282:SF214">
    <property type="entry name" value="CD81 ANTIGEN"/>
    <property type="match status" value="1"/>
</dbReference>
<dbReference type="PANTHER" id="PTHR19282">
    <property type="entry name" value="TETRASPANIN"/>
    <property type="match status" value="1"/>
</dbReference>
<dbReference type="Pfam" id="PF00335">
    <property type="entry name" value="Tetraspanin"/>
    <property type="match status" value="1"/>
</dbReference>
<dbReference type="PIRSF" id="PIRSF002419">
    <property type="entry name" value="Tetraspanin"/>
    <property type="match status" value="1"/>
</dbReference>
<dbReference type="PRINTS" id="PR00259">
    <property type="entry name" value="TMFOUR"/>
</dbReference>
<dbReference type="SUPFAM" id="SSF48652">
    <property type="entry name" value="Tetraspanin"/>
    <property type="match status" value="1"/>
</dbReference>
<dbReference type="PROSITE" id="PS00421">
    <property type="entry name" value="TM4_1"/>
    <property type="match status" value="1"/>
</dbReference>
<accession>P60034</accession>
<accession>P18582</accession>
<gene>
    <name type="primary">CD81</name>
    <name type="synonym">TAPA1</name>
</gene>
<organism>
    <name type="scientific">Pan troglodytes</name>
    <name type="common">Chimpanzee</name>
    <dbReference type="NCBI Taxonomy" id="9598"/>
    <lineage>
        <taxon>Eukaryota</taxon>
        <taxon>Metazoa</taxon>
        <taxon>Chordata</taxon>
        <taxon>Craniata</taxon>
        <taxon>Vertebrata</taxon>
        <taxon>Euteleostomi</taxon>
        <taxon>Mammalia</taxon>
        <taxon>Eutheria</taxon>
        <taxon>Euarchontoglires</taxon>
        <taxon>Primates</taxon>
        <taxon>Haplorrhini</taxon>
        <taxon>Catarrhini</taxon>
        <taxon>Hominidae</taxon>
        <taxon>Pan</taxon>
    </lineage>
</organism>
<protein>
    <recommendedName>
        <fullName>CD81 antigen</fullName>
    </recommendedName>
    <alternativeName>
        <fullName>26 kDa cell surface protein TAPA-1</fullName>
    </alternativeName>
    <alternativeName>
        <fullName>Target of the antiproliferative antibody 1</fullName>
    </alternativeName>
    <cdAntigenName>CD81</cdAntigenName>
</protein>
<keyword id="KW-1064">Adaptive immunity</keyword>
<keyword id="KW-1003">Cell membrane</keyword>
<keyword id="KW-1015">Disulfide bond</keyword>
<keyword id="KW-0391">Immunity</keyword>
<keyword id="KW-0446">Lipid-binding</keyword>
<keyword id="KW-0472">Membrane</keyword>
<keyword id="KW-1185">Reference proteome</keyword>
<keyword id="KW-0812">Transmembrane</keyword>
<keyword id="KW-1133">Transmembrane helix</keyword>